<reference key="1">
    <citation type="journal article" date="2009" name="PLoS ONE">
        <title>The complete genome of Teredinibacter turnerae T7901: an intracellular endosymbiont of marine wood-boring bivalves (shipworms).</title>
        <authorList>
            <person name="Yang J.C."/>
            <person name="Madupu R."/>
            <person name="Durkin A.S."/>
            <person name="Ekborg N.A."/>
            <person name="Pedamallu C.S."/>
            <person name="Hostetler J.B."/>
            <person name="Radune D."/>
            <person name="Toms B.S."/>
            <person name="Henrissat B."/>
            <person name="Coutinho P.M."/>
            <person name="Schwarz S."/>
            <person name="Field L."/>
            <person name="Trindade-Silva A.E."/>
            <person name="Soares C.A.G."/>
            <person name="Elshahawi S."/>
            <person name="Hanora A."/>
            <person name="Schmidt E.W."/>
            <person name="Haygood M.G."/>
            <person name="Posfai J."/>
            <person name="Benner J."/>
            <person name="Madinger C."/>
            <person name="Nove J."/>
            <person name="Anton B."/>
            <person name="Chaudhary K."/>
            <person name="Foster J."/>
            <person name="Holman A."/>
            <person name="Kumar S."/>
            <person name="Lessard P.A."/>
            <person name="Luyten Y.A."/>
            <person name="Slatko B."/>
            <person name="Wood N."/>
            <person name="Wu B."/>
            <person name="Teplitski M."/>
            <person name="Mougous J.D."/>
            <person name="Ward N."/>
            <person name="Eisen J.A."/>
            <person name="Badger J.H."/>
            <person name="Distel D.L."/>
        </authorList>
    </citation>
    <scope>NUCLEOTIDE SEQUENCE [LARGE SCALE GENOMIC DNA]</scope>
    <source>
        <strain>ATCC 39867 / T7901</strain>
    </source>
</reference>
<dbReference type="EMBL" id="CP001614">
    <property type="protein sequence ID" value="ACR11691.1"/>
    <property type="molecule type" value="Genomic_DNA"/>
</dbReference>
<dbReference type="RefSeq" id="WP_015817803.1">
    <property type="nucleotide sequence ID" value="NC_012997.1"/>
</dbReference>
<dbReference type="SMR" id="C5BQ43"/>
<dbReference type="STRING" id="377629.TERTU_0888"/>
<dbReference type="KEGG" id="ttu:TERTU_0888"/>
<dbReference type="eggNOG" id="COG0480">
    <property type="taxonomic scope" value="Bacteria"/>
</dbReference>
<dbReference type="HOGENOM" id="CLU_002794_4_1_6"/>
<dbReference type="OrthoDB" id="9801472at2"/>
<dbReference type="Proteomes" id="UP000009080">
    <property type="component" value="Chromosome"/>
</dbReference>
<dbReference type="GO" id="GO:0005737">
    <property type="term" value="C:cytoplasm"/>
    <property type="evidence" value="ECO:0007669"/>
    <property type="project" value="UniProtKB-SubCell"/>
</dbReference>
<dbReference type="GO" id="GO:0005525">
    <property type="term" value="F:GTP binding"/>
    <property type="evidence" value="ECO:0007669"/>
    <property type="project" value="UniProtKB-UniRule"/>
</dbReference>
<dbReference type="GO" id="GO:0003924">
    <property type="term" value="F:GTPase activity"/>
    <property type="evidence" value="ECO:0007669"/>
    <property type="project" value="InterPro"/>
</dbReference>
<dbReference type="GO" id="GO:0097216">
    <property type="term" value="F:guanosine tetraphosphate binding"/>
    <property type="evidence" value="ECO:0007669"/>
    <property type="project" value="UniProtKB-ARBA"/>
</dbReference>
<dbReference type="GO" id="GO:0003746">
    <property type="term" value="F:translation elongation factor activity"/>
    <property type="evidence" value="ECO:0007669"/>
    <property type="project" value="UniProtKB-UniRule"/>
</dbReference>
<dbReference type="GO" id="GO:0032790">
    <property type="term" value="P:ribosome disassembly"/>
    <property type="evidence" value="ECO:0007669"/>
    <property type="project" value="TreeGrafter"/>
</dbReference>
<dbReference type="CDD" id="cd01886">
    <property type="entry name" value="EF-G"/>
    <property type="match status" value="1"/>
</dbReference>
<dbReference type="CDD" id="cd16262">
    <property type="entry name" value="EFG_III"/>
    <property type="match status" value="1"/>
</dbReference>
<dbReference type="CDD" id="cd01434">
    <property type="entry name" value="EFG_mtEFG1_IV"/>
    <property type="match status" value="1"/>
</dbReference>
<dbReference type="CDD" id="cd03713">
    <property type="entry name" value="EFG_mtEFG_C"/>
    <property type="match status" value="1"/>
</dbReference>
<dbReference type="CDD" id="cd04088">
    <property type="entry name" value="EFG_mtEFG_II"/>
    <property type="match status" value="1"/>
</dbReference>
<dbReference type="FunFam" id="2.40.30.10:FF:000006">
    <property type="entry name" value="Elongation factor G"/>
    <property type="match status" value="1"/>
</dbReference>
<dbReference type="FunFam" id="3.30.230.10:FF:000003">
    <property type="entry name" value="Elongation factor G"/>
    <property type="match status" value="1"/>
</dbReference>
<dbReference type="FunFam" id="3.30.70.240:FF:000001">
    <property type="entry name" value="Elongation factor G"/>
    <property type="match status" value="1"/>
</dbReference>
<dbReference type="FunFam" id="3.30.70.870:FF:000001">
    <property type="entry name" value="Elongation factor G"/>
    <property type="match status" value="1"/>
</dbReference>
<dbReference type="FunFam" id="3.40.50.300:FF:000029">
    <property type="entry name" value="Elongation factor G"/>
    <property type="match status" value="1"/>
</dbReference>
<dbReference type="Gene3D" id="3.30.230.10">
    <property type="match status" value="1"/>
</dbReference>
<dbReference type="Gene3D" id="3.30.70.240">
    <property type="match status" value="1"/>
</dbReference>
<dbReference type="Gene3D" id="3.30.70.870">
    <property type="entry name" value="Elongation Factor G (Translational Gtpase), domain 3"/>
    <property type="match status" value="1"/>
</dbReference>
<dbReference type="Gene3D" id="3.40.50.300">
    <property type="entry name" value="P-loop containing nucleotide triphosphate hydrolases"/>
    <property type="match status" value="1"/>
</dbReference>
<dbReference type="Gene3D" id="2.40.30.10">
    <property type="entry name" value="Translation factors"/>
    <property type="match status" value="1"/>
</dbReference>
<dbReference type="HAMAP" id="MF_00054_B">
    <property type="entry name" value="EF_G_EF_2_B"/>
    <property type="match status" value="1"/>
</dbReference>
<dbReference type="InterPro" id="IPR041095">
    <property type="entry name" value="EFG_II"/>
</dbReference>
<dbReference type="InterPro" id="IPR009022">
    <property type="entry name" value="EFG_III"/>
</dbReference>
<dbReference type="InterPro" id="IPR035647">
    <property type="entry name" value="EFG_III/V"/>
</dbReference>
<dbReference type="InterPro" id="IPR047872">
    <property type="entry name" value="EFG_IV"/>
</dbReference>
<dbReference type="InterPro" id="IPR035649">
    <property type="entry name" value="EFG_V"/>
</dbReference>
<dbReference type="InterPro" id="IPR000640">
    <property type="entry name" value="EFG_V-like"/>
</dbReference>
<dbReference type="InterPro" id="IPR004161">
    <property type="entry name" value="EFTu-like_2"/>
</dbReference>
<dbReference type="InterPro" id="IPR031157">
    <property type="entry name" value="G_TR_CS"/>
</dbReference>
<dbReference type="InterPro" id="IPR027417">
    <property type="entry name" value="P-loop_NTPase"/>
</dbReference>
<dbReference type="InterPro" id="IPR020568">
    <property type="entry name" value="Ribosomal_Su5_D2-typ_SF"/>
</dbReference>
<dbReference type="InterPro" id="IPR014721">
    <property type="entry name" value="Ribsml_uS5_D2-typ_fold_subgr"/>
</dbReference>
<dbReference type="InterPro" id="IPR005225">
    <property type="entry name" value="Small_GTP-bd"/>
</dbReference>
<dbReference type="InterPro" id="IPR000795">
    <property type="entry name" value="T_Tr_GTP-bd_dom"/>
</dbReference>
<dbReference type="InterPro" id="IPR009000">
    <property type="entry name" value="Transl_B-barrel_sf"/>
</dbReference>
<dbReference type="InterPro" id="IPR004540">
    <property type="entry name" value="Transl_elong_EFG/EF2"/>
</dbReference>
<dbReference type="InterPro" id="IPR005517">
    <property type="entry name" value="Transl_elong_EFG/EF2_IV"/>
</dbReference>
<dbReference type="NCBIfam" id="TIGR00484">
    <property type="entry name" value="EF-G"/>
    <property type="match status" value="1"/>
</dbReference>
<dbReference type="NCBIfam" id="NF009381">
    <property type="entry name" value="PRK12740.1-5"/>
    <property type="match status" value="1"/>
</dbReference>
<dbReference type="NCBIfam" id="TIGR00231">
    <property type="entry name" value="small_GTP"/>
    <property type="match status" value="1"/>
</dbReference>
<dbReference type="PANTHER" id="PTHR43261:SF1">
    <property type="entry name" value="RIBOSOME-RELEASING FACTOR 2, MITOCHONDRIAL"/>
    <property type="match status" value="1"/>
</dbReference>
<dbReference type="PANTHER" id="PTHR43261">
    <property type="entry name" value="TRANSLATION ELONGATION FACTOR G-RELATED"/>
    <property type="match status" value="1"/>
</dbReference>
<dbReference type="Pfam" id="PF00679">
    <property type="entry name" value="EFG_C"/>
    <property type="match status" value="1"/>
</dbReference>
<dbReference type="Pfam" id="PF14492">
    <property type="entry name" value="EFG_III"/>
    <property type="match status" value="1"/>
</dbReference>
<dbReference type="Pfam" id="PF03764">
    <property type="entry name" value="EFG_IV"/>
    <property type="match status" value="1"/>
</dbReference>
<dbReference type="Pfam" id="PF00009">
    <property type="entry name" value="GTP_EFTU"/>
    <property type="match status" value="1"/>
</dbReference>
<dbReference type="Pfam" id="PF03144">
    <property type="entry name" value="GTP_EFTU_D2"/>
    <property type="match status" value="1"/>
</dbReference>
<dbReference type="PRINTS" id="PR00315">
    <property type="entry name" value="ELONGATNFCT"/>
</dbReference>
<dbReference type="SMART" id="SM00838">
    <property type="entry name" value="EFG_C"/>
    <property type="match status" value="1"/>
</dbReference>
<dbReference type="SMART" id="SM00889">
    <property type="entry name" value="EFG_IV"/>
    <property type="match status" value="1"/>
</dbReference>
<dbReference type="SUPFAM" id="SSF54980">
    <property type="entry name" value="EF-G C-terminal domain-like"/>
    <property type="match status" value="2"/>
</dbReference>
<dbReference type="SUPFAM" id="SSF52540">
    <property type="entry name" value="P-loop containing nucleoside triphosphate hydrolases"/>
    <property type="match status" value="1"/>
</dbReference>
<dbReference type="SUPFAM" id="SSF54211">
    <property type="entry name" value="Ribosomal protein S5 domain 2-like"/>
    <property type="match status" value="1"/>
</dbReference>
<dbReference type="SUPFAM" id="SSF50447">
    <property type="entry name" value="Translation proteins"/>
    <property type="match status" value="1"/>
</dbReference>
<dbReference type="PROSITE" id="PS00301">
    <property type="entry name" value="G_TR_1"/>
    <property type="match status" value="1"/>
</dbReference>
<dbReference type="PROSITE" id="PS51722">
    <property type="entry name" value="G_TR_2"/>
    <property type="match status" value="1"/>
</dbReference>
<gene>
    <name evidence="1" type="primary">fusA</name>
    <name type="ordered locus">TERTU_0888</name>
</gene>
<feature type="chain" id="PRO_1000202319" description="Elongation factor G">
    <location>
        <begin position="1"/>
        <end position="703"/>
    </location>
</feature>
<feature type="domain" description="tr-type G">
    <location>
        <begin position="8"/>
        <end position="290"/>
    </location>
</feature>
<feature type="binding site" evidence="1">
    <location>
        <begin position="17"/>
        <end position="24"/>
    </location>
    <ligand>
        <name>GTP</name>
        <dbReference type="ChEBI" id="CHEBI:37565"/>
    </ligand>
</feature>
<feature type="binding site" evidence="1">
    <location>
        <begin position="88"/>
        <end position="92"/>
    </location>
    <ligand>
        <name>GTP</name>
        <dbReference type="ChEBI" id="CHEBI:37565"/>
    </ligand>
</feature>
<feature type="binding site" evidence="1">
    <location>
        <begin position="142"/>
        <end position="145"/>
    </location>
    <ligand>
        <name>GTP</name>
        <dbReference type="ChEBI" id="CHEBI:37565"/>
    </ligand>
</feature>
<protein>
    <recommendedName>
        <fullName evidence="1">Elongation factor G</fullName>
        <shortName evidence="1">EF-G</shortName>
    </recommendedName>
</protein>
<sequence length="703" mass="77473">MARKTPIARYRNIGICAHVDAGKTTTTERVLFYTGLSHKIGEVHDGAATMDWMEQEQERGITITSAATTCFWAGMEQQFDQHRINIIDTPGHVDFTIEVERSLRVLDGAVVVLCGSSGVQPQTETVWRQANKYEVPRMVFVNKMDRAGANFLRVVEQLKDRLGATAVPLQMTIGSEDEFKGIVDLIEMKAILWNEADQGMTFDRADIPADMLEECEELREQMVEAAAEANEELMEKYLEEGELTNDEIKKGIRLRTLANEIVPVLGGSAFKNKGVQAMLDAVIEYLPAPTEVKAIQGTLEDGETVAERHADDTEPFSALAFKIATDPFVGTLTFFRVYSGKLESGTALLNSVKGKKERIGRMVQMHANSREEIKEVLAGDIAAAIGLKDTTTGDTLCAENSFIVLERMEFPEPVISVAVEPKSKADQEKMGIALGKLAQEDPSFRVRTDEETGQTIISGMGELHLDILVDRMRREFKVEANIGKPQVAYRERITKTSEIEGKFVRQSGGRGQFGHVWIRFEPAEDGDAEGLEFVNEIVGGVVPKEYIPAVEKGISEQMQNGVVAGYPLLGLKATIYDGSYHDVDSNEMAFKIAASMATKKLAQHGGAVLLEPMMKVEVVTPEENMGDVVGDLNRRRGLIQGMDENPSGKVVNAEVPLAEMFGYATALRSATQGRATFTMEFERYAEAPSNIAEEIIAKNKTGE</sequence>
<name>EFG_TERTT</name>
<organism>
    <name type="scientific">Teredinibacter turnerae (strain ATCC 39867 / T7901)</name>
    <dbReference type="NCBI Taxonomy" id="377629"/>
    <lineage>
        <taxon>Bacteria</taxon>
        <taxon>Pseudomonadati</taxon>
        <taxon>Pseudomonadota</taxon>
        <taxon>Gammaproteobacteria</taxon>
        <taxon>Cellvibrionales</taxon>
        <taxon>Cellvibrionaceae</taxon>
        <taxon>Teredinibacter</taxon>
    </lineage>
</organism>
<evidence type="ECO:0000255" key="1">
    <source>
        <dbReference type="HAMAP-Rule" id="MF_00054"/>
    </source>
</evidence>
<proteinExistence type="inferred from homology"/>
<keyword id="KW-0963">Cytoplasm</keyword>
<keyword id="KW-0251">Elongation factor</keyword>
<keyword id="KW-0342">GTP-binding</keyword>
<keyword id="KW-0547">Nucleotide-binding</keyword>
<keyword id="KW-0648">Protein biosynthesis</keyword>
<keyword id="KW-1185">Reference proteome</keyword>
<accession>C5BQ43</accession>
<comment type="function">
    <text evidence="1">Catalyzes the GTP-dependent ribosomal translocation step during translation elongation. During this step, the ribosome changes from the pre-translocational (PRE) to the post-translocational (POST) state as the newly formed A-site-bound peptidyl-tRNA and P-site-bound deacylated tRNA move to the P and E sites, respectively. Catalyzes the coordinated movement of the two tRNA molecules, the mRNA and conformational changes in the ribosome.</text>
</comment>
<comment type="subcellular location">
    <subcellularLocation>
        <location evidence="1">Cytoplasm</location>
    </subcellularLocation>
</comment>
<comment type="similarity">
    <text evidence="1">Belongs to the TRAFAC class translation factor GTPase superfamily. Classic translation factor GTPase family. EF-G/EF-2 subfamily.</text>
</comment>